<feature type="chain" id="PRO_1000116677" description="Elongation factor Ts">
    <location>
        <begin position="1"/>
        <end position="291"/>
    </location>
</feature>
<feature type="region of interest" description="Involved in Mg(2+) ion dislocation from EF-Tu" evidence="1">
    <location>
        <begin position="80"/>
        <end position="83"/>
    </location>
</feature>
<accession>B2HV06</accession>
<comment type="function">
    <text evidence="1">Associates with the EF-Tu.GDP complex and induces the exchange of GDP to GTP. It remains bound to the aminoacyl-tRNA.EF-Tu.GTP complex up to the GTP hydrolysis stage on the ribosome.</text>
</comment>
<comment type="subcellular location">
    <subcellularLocation>
        <location evidence="1">Cytoplasm</location>
    </subcellularLocation>
</comment>
<comment type="similarity">
    <text evidence="1">Belongs to the EF-Ts family.</text>
</comment>
<gene>
    <name evidence="1" type="primary">tsf</name>
    <name type="ordered locus">ACICU_02524</name>
</gene>
<proteinExistence type="inferred from homology"/>
<reference key="1">
    <citation type="journal article" date="2008" name="Antimicrob. Agents Chemother.">
        <title>Whole-genome pyrosequencing of an epidemic multidrug-resistant Acinetobacter baumannii strain belonging to the European clone II group.</title>
        <authorList>
            <person name="Iacono M."/>
            <person name="Villa L."/>
            <person name="Fortini D."/>
            <person name="Bordoni R."/>
            <person name="Imperi F."/>
            <person name="Bonnal R.J."/>
            <person name="Sicheritz-Ponten T."/>
            <person name="De Bellis G."/>
            <person name="Visca P."/>
            <person name="Cassone A."/>
            <person name="Carattoli A."/>
        </authorList>
    </citation>
    <scope>NUCLEOTIDE SEQUENCE [LARGE SCALE GENOMIC DNA]</scope>
    <source>
        <strain>ACICU</strain>
    </source>
</reference>
<organism>
    <name type="scientific">Acinetobacter baumannii (strain ACICU)</name>
    <dbReference type="NCBI Taxonomy" id="405416"/>
    <lineage>
        <taxon>Bacteria</taxon>
        <taxon>Pseudomonadati</taxon>
        <taxon>Pseudomonadota</taxon>
        <taxon>Gammaproteobacteria</taxon>
        <taxon>Moraxellales</taxon>
        <taxon>Moraxellaceae</taxon>
        <taxon>Acinetobacter</taxon>
        <taxon>Acinetobacter calcoaceticus/baumannii complex</taxon>
    </lineage>
</organism>
<protein>
    <recommendedName>
        <fullName evidence="1">Elongation factor Ts</fullName>
        <shortName evidence="1">EF-Ts</shortName>
    </recommendedName>
</protein>
<keyword id="KW-0963">Cytoplasm</keyword>
<keyword id="KW-0251">Elongation factor</keyword>
<keyword id="KW-0648">Protein biosynthesis</keyword>
<sequence length="291" mass="30710">MTAITASMVKELRDRTGLAMMECKKALTEANGDIELAIDNLRKSGQAKAAKKAGNIAADGAITIVQDGNKAILVEVNCQTDFVAKDENFSNFAHTVAAAALAAGETDAAKIAELKLADGQSVEEARIALVQKIGENIQVRRAKIVEGEQLAIYKHGLKIGVVVSYTGDADTGKGIAMHVAAFNPVAVNAEAVPADLIAKEKEIAEAKALESGKPANIVEKMVTGSVEKYLNEVALDRQMYVIDNEKKVADVLKATGTNVANFVRFEVGEGIEKKAELSFAEEVAAAQAAAK</sequence>
<evidence type="ECO:0000255" key="1">
    <source>
        <dbReference type="HAMAP-Rule" id="MF_00050"/>
    </source>
</evidence>
<dbReference type="EMBL" id="CP000863">
    <property type="protein sequence ID" value="ACC57836.1"/>
    <property type="molecule type" value="Genomic_DNA"/>
</dbReference>
<dbReference type="RefSeq" id="WP_000125378.1">
    <property type="nucleotide sequence ID" value="NZ_CP031380.1"/>
</dbReference>
<dbReference type="SMR" id="B2HV06"/>
<dbReference type="GeneID" id="92894652"/>
<dbReference type="KEGG" id="abc:ACICU_02524"/>
<dbReference type="HOGENOM" id="CLU_047155_0_2_6"/>
<dbReference type="Proteomes" id="UP000008839">
    <property type="component" value="Chromosome"/>
</dbReference>
<dbReference type="GO" id="GO:0005737">
    <property type="term" value="C:cytoplasm"/>
    <property type="evidence" value="ECO:0007669"/>
    <property type="project" value="UniProtKB-SubCell"/>
</dbReference>
<dbReference type="GO" id="GO:0003746">
    <property type="term" value="F:translation elongation factor activity"/>
    <property type="evidence" value="ECO:0007669"/>
    <property type="project" value="UniProtKB-UniRule"/>
</dbReference>
<dbReference type="CDD" id="cd14275">
    <property type="entry name" value="UBA_EF-Ts"/>
    <property type="match status" value="1"/>
</dbReference>
<dbReference type="FunFam" id="1.10.286.20:FF:000001">
    <property type="entry name" value="Elongation factor Ts"/>
    <property type="match status" value="1"/>
</dbReference>
<dbReference type="FunFam" id="1.10.8.10:FF:000001">
    <property type="entry name" value="Elongation factor Ts"/>
    <property type="match status" value="1"/>
</dbReference>
<dbReference type="FunFam" id="3.30.479.20:FF:000001">
    <property type="entry name" value="Elongation factor Ts"/>
    <property type="match status" value="1"/>
</dbReference>
<dbReference type="Gene3D" id="1.10.286.20">
    <property type="match status" value="1"/>
</dbReference>
<dbReference type="Gene3D" id="1.10.8.10">
    <property type="entry name" value="DNA helicase RuvA subunit, C-terminal domain"/>
    <property type="match status" value="1"/>
</dbReference>
<dbReference type="Gene3D" id="3.30.479.20">
    <property type="entry name" value="Elongation factor Ts, dimerisation domain"/>
    <property type="match status" value="2"/>
</dbReference>
<dbReference type="HAMAP" id="MF_00050">
    <property type="entry name" value="EF_Ts"/>
    <property type="match status" value="1"/>
</dbReference>
<dbReference type="InterPro" id="IPR036402">
    <property type="entry name" value="EF-Ts_dimer_sf"/>
</dbReference>
<dbReference type="InterPro" id="IPR001816">
    <property type="entry name" value="Transl_elong_EFTs/EF1B"/>
</dbReference>
<dbReference type="InterPro" id="IPR014039">
    <property type="entry name" value="Transl_elong_EFTs/EF1B_dimer"/>
</dbReference>
<dbReference type="InterPro" id="IPR018101">
    <property type="entry name" value="Transl_elong_Ts_CS"/>
</dbReference>
<dbReference type="InterPro" id="IPR009060">
    <property type="entry name" value="UBA-like_sf"/>
</dbReference>
<dbReference type="NCBIfam" id="TIGR00116">
    <property type="entry name" value="tsf"/>
    <property type="match status" value="1"/>
</dbReference>
<dbReference type="PANTHER" id="PTHR11741">
    <property type="entry name" value="ELONGATION FACTOR TS"/>
    <property type="match status" value="1"/>
</dbReference>
<dbReference type="PANTHER" id="PTHR11741:SF0">
    <property type="entry name" value="ELONGATION FACTOR TS, MITOCHONDRIAL"/>
    <property type="match status" value="1"/>
</dbReference>
<dbReference type="Pfam" id="PF00889">
    <property type="entry name" value="EF_TS"/>
    <property type="match status" value="1"/>
</dbReference>
<dbReference type="SUPFAM" id="SSF54713">
    <property type="entry name" value="Elongation factor Ts (EF-Ts), dimerisation domain"/>
    <property type="match status" value="1"/>
</dbReference>
<dbReference type="SUPFAM" id="SSF46934">
    <property type="entry name" value="UBA-like"/>
    <property type="match status" value="1"/>
</dbReference>
<dbReference type="PROSITE" id="PS01126">
    <property type="entry name" value="EF_TS_1"/>
    <property type="match status" value="1"/>
</dbReference>
<dbReference type="PROSITE" id="PS01127">
    <property type="entry name" value="EF_TS_2"/>
    <property type="match status" value="1"/>
</dbReference>
<name>EFTS_ACIBC</name>